<name>SYE1_CAMJE</name>
<keyword id="KW-0030">Aminoacyl-tRNA synthetase</keyword>
<keyword id="KW-0067">ATP-binding</keyword>
<keyword id="KW-0963">Cytoplasm</keyword>
<keyword id="KW-0436">Ligase</keyword>
<keyword id="KW-0547">Nucleotide-binding</keyword>
<keyword id="KW-0648">Protein biosynthesis</keyword>
<keyword id="KW-1185">Reference proteome</keyword>
<sequence length="431" mass="50191">MYRFAPSPTGDMHIGNLRAAIFNYICARQKNMDFILRIEDTDKARNIAGKEEEIKEILNLFSISWQHYYIQSENLKFHRQMALKLVSEKKAFACFCTEEELEAKKELAKKQGKAYRYDGTCEKLADIDVLECEKPFVIRLKKPTHTMKFTDFIKGELSFEPENIDSFVIMRTDKTPTYNFACAVDDMLENVTCIIRGEDHVSNTPKQEHIRASLGYNKAMTYAHLPIILNEEGVKMSKREAHSSVKWLLESGILPSAIANYLIMLGNKTPCEIFTLEEAIKWFDISKVSKAPARFDLKKLLQINREHIKMIKDDELNKILDLNKDLAQLAKFYTQETSTIKELKEKMQAIFNAKDFGEFETEYKILKELLKDIELFENYEDFKNELLNKSNLKGKKFFMPLRIILTGNIHGPELSDLYPYIKNFIHELARI</sequence>
<evidence type="ECO:0000255" key="1">
    <source>
        <dbReference type="HAMAP-Rule" id="MF_00022"/>
    </source>
</evidence>
<dbReference type="EC" id="6.1.1.17" evidence="1"/>
<dbReference type="EMBL" id="AL111168">
    <property type="protein sequence ID" value="CAL34973.1"/>
    <property type="molecule type" value="Genomic_DNA"/>
</dbReference>
<dbReference type="PIR" id="E81357">
    <property type="entry name" value="E81357"/>
</dbReference>
<dbReference type="SMR" id="Q9PP78"/>
<dbReference type="IntAct" id="Q9PP78">
    <property type="interactions" value="1"/>
</dbReference>
<dbReference type="STRING" id="192222.Cj0845c"/>
<dbReference type="PaxDb" id="192222-Cj0845c"/>
<dbReference type="EnsemblBacteria" id="CAL34973">
    <property type="protein sequence ID" value="CAL34973"/>
    <property type="gene ID" value="Cj0845c"/>
</dbReference>
<dbReference type="KEGG" id="cje:Cj0845c"/>
<dbReference type="PATRIC" id="fig|192222.6.peg.833"/>
<dbReference type="eggNOG" id="COG0008">
    <property type="taxonomic scope" value="Bacteria"/>
</dbReference>
<dbReference type="HOGENOM" id="CLU_015768_6_0_7"/>
<dbReference type="OrthoDB" id="9807503at2"/>
<dbReference type="Proteomes" id="UP000000799">
    <property type="component" value="Chromosome"/>
</dbReference>
<dbReference type="GO" id="GO:0005829">
    <property type="term" value="C:cytosol"/>
    <property type="evidence" value="ECO:0007669"/>
    <property type="project" value="TreeGrafter"/>
</dbReference>
<dbReference type="GO" id="GO:0005524">
    <property type="term" value="F:ATP binding"/>
    <property type="evidence" value="ECO:0007669"/>
    <property type="project" value="UniProtKB-UniRule"/>
</dbReference>
<dbReference type="GO" id="GO:0004818">
    <property type="term" value="F:glutamate-tRNA ligase activity"/>
    <property type="evidence" value="ECO:0007669"/>
    <property type="project" value="UniProtKB-UniRule"/>
</dbReference>
<dbReference type="GO" id="GO:0000049">
    <property type="term" value="F:tRNA binding"/>
    <property type="evidence" value="ECO:0007669"/>
    <property type="project" value="InterPro"/>
</dbReference>
<dbReference type="GO" id="GO:0006424">
    <property type="term" value="P:glutamyl-tRNA aminoacylation"/>
    <property type="evidence" value="ECO:0007669"/>
    <property type="project" value="UniProtKB-UniRule"/>
</dbReference>
<dbReference type="Gene3D" id="1.10.10.350">
    <property type="match status" value="1"/>
</dbReference>
<dbReference type="Gene3D" id="3.40.50.620">
    <property type="entry name" value="HUPs"/>
    <property type="match status" value="1"/>
</dbReference>
<dbReference type="HAMAP" id="MF_00022">
    <property type="entry name" value="Glu_tRNA_synth_type1"/>
    <property type="match status" value="1"/>
</dbReference>
<dbReference type="InterPro" id="IPR045462">
    <property type="entry name" value="aa-tRNA-synth_I_cd-bd"/>
</dbReference>
<dbReference type="InterPro" id="IPR020751">
    <property type="entry name" value="aa-tRNA-synth_I_codon-bd_sub2"/>
</dbReference>
<dbReference type="InterPro" id="IPR001412">
    <property type="entry name" value="aa-tRNA-synth_I_CS"/>
</dbReference>
<dbReference type="InterPro" id="IPR008925">
    <property type="entry name" value="aa_tRNA-synth_I_cd-bd_sf"/>
</dbReference>
<dbReference type="InterPro" id="IPR004527">
    <property type="entry name" value="Glu-tRNA-ligase_bac/mito"/>
</dbReference>
<dbReference type="InterPro" id="IPR000924">
    <property type="entry name" value="Glu/Gln-tRNA-synth"/>
</dbReference>
<dbReference type="InterPro" id="IPR020058">
    <property type="entry name" value="Glu/Gln-tRNA-synth_Ib_cat-dom"/>
</dbReference>
<dbReference type="InterPro" id="IPR049940">
    <property type="entry name" value="GluQ/Sye"/>
</dbReference>
<dbReference type="InterPro" id="IPR014729">
    <property type="entry name" value="Rossmann-like_a/b/a_fold"/>
</dbReference>
<dbReference type="NCBIfam" id="TIGR00464">
    <property type="entry name" value="gltX_bact"/>
    <property type="match status" value="1"/>
</dbReference>
<dbReference type="PANTHER" id="PTHR43311">
    <property type="entry name" value="GLUTAMATE--TRNA LIGASE"/>
    <property type="match status" value="1"/>
</dbReference>
<dbReference type="PANTHER" id="PTHR43311:SF2">
    <property type="entry name" value="GLUTAMATE--TRNA LIGASE, MITOCHONDRIAL-RELATED"/>
    <property type="match status" value="1"/>
</dbReference>
<dbReference type="Pfam" id="PF19269">
    <property type="entry name" value="Anticodon_2"/>
    <property type="match status" value="1"/>
</dbReference>
<dbReference type="Pfam" id="PF00749">
    <property type="entry name" value="tRNA-synt_1c"/>
    <property type="match status" value="1"/>
</dbReference>
<dbReference type="PRINTS" id="PR00987">
    <property type="entry name" value="TRNASYNTHGLU"/>
</dbReference>
<dbReference type="SUPFAM" id="SSF48163">
    <property type="entry name" value="An anticodon-binding domain of class I aminoacyl-tRNA synthetases"/>
    <property type="match status" value="1"/>
</dbReference>
<dbReference type="SUPFAM" id="SSF52374">
    <property type="entry name" value="Nucleotidylyl transferase"/>
    <property type="match status" value="1"/>
</dbReference>
<dbReference type="PROSITE" id="PS00178">
    <property type="entry name" value="AA_TRNA_LIGASE_I"/>
    <property type="match status" value="1"/>
</dbReference>
<feature type="chain" id="PRO_0000119532" description="Glutamate--tRNA ligase 1">
    <location>
        <begin position="1"/>
        <end position="431"/>
    </location>
</feature>
<feature type="short sequence motif" description="'HIGH' region" evidence="1">
    <location>
        <begin position="6"/>
        <end position="16"/>
    </location>
</feature>
<feature type="short sequence motif" description="'KMSKS' region" evidence="1">
    <location>
        <begin position="235"/>
        <end position="239"/>
    </location>
</feature>
<feature type="binding site" evidence="1">
    <location>
        <position position="238"/>
    </location>
    <ligand>
        <name>ATP</name>
        <dbReference type="ChEBI" id="CHEBI:30616"/>
    </ligand>
</feature>
<gene>
    <name evidence="1" type="primary">gltX1</name>
    <name type="synonym">gltX2</name>
    <name type="ordered locus">Cj0845c</name>
</gene>
<organism>
    <name type="scientific">Campylobacter jejuni subsp. jejuni serotype O:2 (strain ATCC 700819 / NCTC 11168)</name>
    <dbReference type="NCBI Taxonomy" id="192222"/>
    <lineage>
        <taxon>Bacteria</taxon>
        <taxon>Pseudomonadati</taxon>
        <taxon>Campylobacterota</taxon>
        <taxon>Epsilonproteobacteria</taxon>
        <taxon>Campylobacterales</taxon>
        <taxon>Campylobacteraceae</taxon>
        <taxon>Campylobacter</taxon>
    </lineage>
</organism>
<comment type="function">
    <text evidence="1">Catalyzes the attachment of glutamate to tRNA(Glu) in a two-step reaction: glutamate is first activated by ATP to form Glu-AMP and then transferred to the acceptor end of tRNA(Glu).</text>
</comment>
<comment type="catalytic activity">
    <reaction evidence="1">
        <text>tRNA(Glu) + L-glutamate + ATP = L-glutamyl-tRNA(Glu) + AMP + diphosphate</text>
        <dbReference type="Rhea" id="RHEA:23540"/>
        <dbReference type="Rhea" id="RHEA-COMP:9663"/>
        <dbReference type="Rhea" id="RHEA-COMP:9680"/>
        <dbReference type="ChEBI" id="CHEBI:29985"/>
        <dbReference type="ChEBI" id="CHEBI:30616"/>
        <dbReference type="ChEBI" id="CHEBI:33019"/>
        <dbReference type="ChEBI" id="CHEBI:78442"/>
        <dbReference type="ChEBI" id="CHEBI:78520"/>
        <dbReference type="ChEBI" id="CHEBI:456215"/>
        <dbReference type="EC" id="6.1.1.17"/>
    </reaction>
</comment>
<comment type="subunit">
    <text evidence="1">Monomer.</text>
</comment>
<comment type="subcellular location">
    <subcellularLocation>
        <location evidence="1">Cytoplasm</location>
    </subcellularLocation>
</comment>
<comment type="similarity">
    <text evidence="1">Belongs to the class-I aminoacyl-tRNA synthetase family. Glutamate--tRNA ligase type 1 subfamily.</text>
</comment>
<protein>
    <recommendedName>
        <fullName evidence="1">Glutamate--tRNA ligase 1</fullName>
        <ecNumber evidence="1">6.1.1.17</ecNumber>
    </recommendedName>
    <alternativeName>
        <fullName evidence="1">Glutamyl-tRNA synthetase 1</fullName>
        <shortName evidence="1">GluRS 1</shortName>
    </alternativeName>
</protein>
<accession>Q9PP78</accession>
<accession>Q0PA45</accession>
<proteinExistence type="inferred from homology"/>
<reference key="1">
    <citation type="journal article" date="2000" name="Nature">
        <title>The genome sequence of the food-borne pathogen Campylobacter jejuni reveals hypervariable sequences.</title>
        <authorList>
            <person name="Parkhill J."/>
            <person name="Wren B.W."/>
            <person name="Mungall K.L."/>
            <person name="Ketley J.M."/>
            <person name="Churcher C.M."/>
            <person name="Basham D."/>
            <person name="Chillingworth T."/>
            <person name="Davies R.M."/>
            <person name="Feltwell T."/>
            <person name="Holroyd S."/>
            <person name="Jagels K."/>
            <person name="Karlyshev A.V."/>
            <person name="Moule S."/>
            <person name="Pallen M.J."/>
            <person name="Penn C.W."/>
            <person name="Quail M.A."/>
            <person name="Rajandream M.A."/>
            <person name="Rutherford K.M."/>
            <person name="van Vliet A.H.M."/>
            <person name="Whitehead S."/>
            <person name="Barrell B.G."/>
        </authorList>
    </citation>
    <scope>NUCLEOTIDE SEQUENCE [LARGE SCALE GENOMIC DNA]</scope>
    <source>
        <strain>ATCC 700819 / NCTC 11168</strain>
    </source>
</reference>